<accession>Q09272</accession>
<keyword id="KW-0119">Carbohydrate metabolism</keyword>
<keyword id="KW-0333">Golgi apparatus</keyword>
<keyword id="KW-0472">Membrane</keyword>
<keyword id="KW-1185">Reference proteome</keyword>
<keyword id="KW-0735">Signal-anchor</keyword>
<keyword id="KW-0808">Transferase</keyword>
<keyword id="KW-0812">Transmembrane</keyword>
<keyword id="KW-1133">Transmembrane helix</keyword>
<dbReference type="EC" id="2.8.2.5" evidence="1 2"/>
<dbReference type="EMBL" id="Z48045">
    <property type="protein sequence ID" value="CAA88098.1"/>
    <property type="molecule type" value="Genomic_DNA"/>
</dbReference>
<dbReference type="PIR" id="T19872">
    <property type="entry name" value="T19872"/>
</dbReference>
<dbReference type="RefSeq" id="NP_495699.1">
    <property type="nucleotide sequence ID" value="NM_063298.6"/>
</dbReference>
<dbReference type="SMR" id="Q09272"/>
<dbReference type="FunCoup" id="Q09272">
    <property type="interactions" value="9"/>
</dbReference>
<dbReference type="STRING" id="6239.C41C4.1.1"/>
<dbReference type="PaxDb" id="6239-C41C4.1"/>
<dbReference type="EnsemblMetazoa" id="C41C4.1.1">
    <property type="protein sequence ID" value="C41C4.1.1"/>
    <property type="gene ID" value="WBGene00008050"/>
</dbReference>
<dbReference type="GeneID" id="174304"/>
<dbReference type="KEGG" id="cel:CELE_C41C4.1"/>
<dbReference type="UCSC" id="C41C4.1">
    <property type="organism name" value="c. elegans"/>
</dbReference>
<dbReference type="AGR" id="WB:WBGene00008050"/>
<dbReference type="CTD" id="174304"/>
<dbReference type="WormBase" id="C41C4.1">
    <property type="protein sequence ID" value="CE01516"/>
    <property type="gene ID" value="WBGene00008050"/>
    <property type="gene designation" value="chst-1"/>
</dbReference>
<dbReference type="eggNOG" id="KOG4651">
    <property type="taxonomic scope" value="Eukaryota"/>
</dbReference>
<dbReference type="GeneTree" id="ENSGT00970000195842"/>
<dbReference type="HOGENOM" id="CLU_069458_0_0_1"/>
<dbReference type="InParanoid" id="Q09272"/>
<dbReference type="OMA" id="KMGREIC"/>
<dbReference type="OrthoDB" id="408912at2759"/>
<dbReference type="PhylomeDB" id="Q09272"/>
<dbReference type="BRENDA" id="2.8.2.5">
    <property type="organism ID" value="1045"/>
</dbReference>
<dbReference type="PRO" id="PR:Q09272"/>
<dbReference type="Proteomes" id="UP000001940">
    <property type="component" value="Chromosome II"/>
</dbReference>
<dbReference type="Bgee" id="WBGene00008050">
    <property type="expression patterns" value="Expressed in germ line (C elegans) and 3 other cell types or tissues"/>
</dbReference>
<dbReference type="GO" id="GO:0000139">
    <property type="term" value="C:Golgi membrane"/>
    <property type="evidence" value="ECO:0007669"/>
    <property type="project" value="UniProtKB-SubCell"/>
</dbReference>
<dbReference type="GO" id="GO:0047756">
    <property type="term" value="F:chondroitin 4-sulfotransferase activity"/>
    <property type="evidence" value="ECO:0000314"/>
    <property type="project" value="UniProtKB"/>
</dbReference>
<dbReference type="GO" id="GO:0050650">
    <property type="term" value="P:chondroitin sulfate proteoglycan biosynthetic process"/>
    <property type="evidence" value="ECO:0000314"/>
    <property type="project" value="UniProtKB"/>
</dbReference>
<dbReference type="GO" id="GO:1902884">
    <property type="term" value="P:positive regulation of response to oxidative stress"/>
    <property type="evidence" value="ECO:0000315"/>
    <property type="project" value="UniProtKB"/>
</dbReference>
<dbReference type="InterPro" id="IPR007669">
    <property type="entry name" value="Chst-1-like"/>
</dbReference>
<dbReference type="InterPro" id="IPR005331">
    <property type="entry name" value="Sulfotransferase"/>
</dbReference>
<dbReference type="PANTHER" id="PTHR22900:SF6">
    <property type="entry name" value="CARBOHYDRATE SULFOTRANSFERASE CHST-1"/>
    <property type="match status" value="1"/>
</dbReference>
<dbReference type="PANTHER" id="PTHR22900">
    <property type="entry name" value="PROTEIN CBG14245-RELATED"/>
    <property type="match status" value="1"/>
</dbReference>
<dbReference type="Pfam" id="PF03567">
    <property type="entry name" value="Sulfotransfer_2"/>
    <property type="match status" value="1"/>
</dbReference>
<organism>
    <name type="scientific">Caenorhabditis elegans</name>
    <dbReference type="NCBI Taxonomy" id="6239"/>
    <lineage>
        <taxon>Eukaryota</taxon>
        <taxon>Metazoa</taxon>
        <taxon>Ecdysozoa</taxon>
        <taxon>Nematoda</taxon>
        <taxon>Chromadorea</taxon>
        <taxon>Rhabditida</taxon>
        <taxon>Rhabditina</taxon>
        <taxon>Rhabditomorpha</taxon>
        <taxon>Rhabditoidea</taxon>
        <taxon>Rhabditidae</taxon>
        <taxon>Peloderinae</taxon>
        <taxon>Caenorhabditis</taxon>
    </lineage>
</organism>
<sequence>MLKWFIISCCLLTAISYSTYYLFTSNSWIKTVKTHTYSRFYQLIKENTKTQLDRLQEEAKLSGKSLIPPFINFDREYAIAPKYNISICRIKKSMSTLMSGVACVLYDTGKFMRNNRSILEVWSHRFCGEKNEYRRMNEVKWRMGDAHHTFKKIVVIRDPIARFISFFSNKCIFEAQKYPDRKQCYNCQGNVTCFLEKQYERFVQHSSDYSRIRPSYEDKHAAPLSWNCEFGKFLKDYKIIKLAVDPKDRKNGLANLMNVLKESNVPNSTLRFIEKSALEGETMHATYDSDAHDVVKKEIENDKKIREWLKRIYYLDFVIFDFDTTFINS</sequence>
<name>CHST_CAEEL</name>
<evidence type="ECO:0000269" key="1">
    <source>
    </source>
</evidence>
<evidence type="ECO:0000269" key="2">
    <source>
    </source>
</evidence>
<evidence type="ECO:0000303" key="3">
    <source>
    </source>
</evidence>
<evidence type="ECO:0000305" key="4"/>
<evidence type="ECO:0000312" key="5">
    <source>
        <dbReference type="WormBase" id="C41C4.1"/>
    </source>
</evidence>
<gene>
    <name evidence="3 5" type="primary">chst-1</name>
    <name evidence="5" type="ORF">C41C4.1</name>
</gene>
<comment type="function">
    <text evidence="1 2">Catalyzes the transfer of sulfate to position 4 of non-reducing N-acetylgalactosamine (GalNAc) residue of chondroitin.</text>
</comment>
<comment type="catalytic activity">
    <reaction evidence="1 2">
        <text>chondroitin beta-D-glucuronate + n 3'-phosphoadenylyl sulfate = chondroitin 4'-sulfate + n adenosine 3',5'-bisphosphate + n H(+)</text>
        <dbReference type="Rhea" id="RHEA:16101"/>
        <dbReference type="Rhea" id="RHEA-COMP:9827"/>
        <dbReference type="Rhea" id="RHEA-COMP:9829"/>
        <dbReference type="ChEBI" id="CHEBI:15378"/>
        <dbReference type="ChEBI" id="CHEBI:57652"/>
        <dbReference type="ChEBI" id="CHEBI:58339"/>
        <dbReference type="ChEBI" id="CHEBI:58343"/>
        <dbReference type="ChEBI" id="CHEBI:58422"/>
        <dbReference type="EC" id="2.8.2.5"/>
    </reaction>
</comment>
<comment type="subcellular location">
    <subcellularLocation>
        <location evidence="4">Golgi apparatus membrane</location>
        <topology evidence="4">Single-pass type II membrane protein</topology>
    </subcellularLocation>
</comment>
<comment type="tissue specificity">
    <text evidence="1">Highly expressed in the head and tail of hermaphrodites, in particular in amphid and phasmid sheath cells.</text>
</comment>
<comment type="disruption phenotype">
    <text evidence="1 2">The tm576 deletion mutant is lethal (PubMed:27645998). The ok625 deletion mutant has reduced levels of 4-O-sulfated disaccharides, but increased levels of 6-O-sulfated disaccharides (PubMed:27645998, PubMed:27703236). Increased mortality in response to oxidative stress (PubMed:27645998).</text>
</comment>
<comment type="similarity">
    <text evidence="4">Belongs to the sulfotransferase 2 family.</text>
</comment>
<reference key="1">
    <citation type="journal article" date="1998" name="Science">
        <title>Genome sequence of the nematode C. elegans: a platform for investigating biology.</title>
        <authorList>
            <consortium name="The C. elegans sequencing consortium"/>
        </authorList>
    </citation>
    <scope>NUCLEOTIDE SEQUENCE [LARGE SCALE GENOMIC DNA]</scope>
    <source>
        <strain>Bristol N2</strain>
    </source>
</reference>
<reference key="2">
    <citation type="journal article" date="2016" name="J. Biol. Chem.">
        <title>Chondroitin 4-O-sulfotransferase ss indispensable for sulfation of chondroitin and plays an important role in maintaining normal life span and oxidative stress responses in nematodes.</title>
        <authorList>
            <person name="Izumikawa T."/>
            <person name="Dejima K."/>
            <person name="Watamoto Y."/>
            <person name="Nomura K.H."/>
            <person name="Kanaki N."/>
            <person name="Rikitake M."/>
            <person name="Tou M."/>
            <person name="Murata D."/>
            <person name="Yanagita E."/>
            <person name="Kano A."/>
            <person name="Mitani S."/>
            <person name="Nomura K."/>
            <person name="Kitagawa H."/>
        </authorList>
    </citation>
    <scope>FUNCTION</scope>
    <scope>CATALYTIC ACTIVITY</scope>
    <scope>TISSUE SPECIFICITY</scope>
    <scope>DISRUPTION PHENOTYPE</scope>
</reference>
<reference key="3">
    <citation type="journal article" date="2016" name="Sci. Rep.">
        <title>Nematodes join the family of chondroitin sulfate-synthesizing organisms: Identification of an active chondroitin sulfotransferase in Caenorhabditis elegans.</title>
        <authorList>
            <person name="Dierker T."/>
            <person name="Shao C."/>
            <person name="Haitina T."/>
            <person name="Zaia J."/>
            <person name="Hinas A."/>
            <person name="Kjellen L."/>
        </authorList>
    </citation>
    <scope>FUNCTION</scope>
    <scope>CATALYTIC ACTIVITY</scope>
    <scope>DISRUPTION PHENOTYPE</scope>
</reference>
<protein>
    <recommendedName>
        <fullName evidence="4">Carbohydrate sulfotransferase chst-1</fullName>
        <ecNumber evidence="1 2">2.8.2.5</ecNumber>
    </recommendedName>
    <alternativeName>
        <fullName evidence="4">Chondroitin 4-O-sulfotransferase</fullName>
    </alternativeName>
    <alternativeName>
        <fullName evidence="4">Chondroitin 4-sulfotransferase</fullName>
        <shortName evidence="4">C4S</shortName>
        <shortName evidence="4">C4ST</shortName>
    </alternativeName>
</protein>
<feature type="chain" id="PRO_0000065232" description="Carbohydrate sulfotransferase chst-1" evidence="4">
    <location>
        <begin position="1"/>
        <end position="329"/>
    </location>
</feature>
<feature type="topological domain" description="Cytoplasmic" evidence="4">
    <location>
        <begin position="1"/>
        <end position="3"/>
    </location>
</feature>
<feature type="transmembrane region" description="Helical; Signal-anchor for type II membrane protein" evidence="4">
    <location>
        <begin position="4"/>
        <end position="23"/>
    </location>
</feature>
<feature type="topological domain" description="Lumenal" evidence="4">
    <location>
        <begin position="24"/>
        <end position="329"/>
    </location>
</feature>
<feature type="binding site" evidence="4">
    <location>
        <begin position="91"/>
        <end position="97"/>
    </location>
    <ligand>
        <name>3'-phosphoadenylyl sulfate</name>
        <dbReference type="ChEBI" id="CHEBI:58339"/>
    </ligand>
</feature>
<feature type="binding site" evidence="4">
    <location>
        <begin position="157"/>
        <end position="165"/>
    </location>
    <ligand>
        <name>3'-phosphoadenylyl sulfate</name>
        <dbReference type="ChEBI" id="CHEBI:58339"/>
    </ligand>
</feature>
<proteinExistence type="evidence at protein level"/>